<dbReference type="EMBL" id="AE016814">
    <property type="protein sequence ID" value="AAS50394.2"/>
    <property type="molecule type" value="Genomic_DNA"/>
</dbReference>
<dbReference type="RefSeq" id="NP_982570.2">
    <property type="nucleotide sequence ID" value="NM_207923.2"/>
</dbReference>
<dbReference type="SMR" id="Q75EQ0"/>
<dbReference type="FunCoup" id="Q75EQ0">
    <property type="interactions" value="215"/>
</dbReference>
<dbReference type="STRING" id="284811.Q75EQ0"/>
<dbReference type="EnsemblFungi" id="AAS50394">
    <property type="protein sequence ID" value="AAS50394"/>
    <property type="gene ID" value="AGOS_AAR029W"/>
</dbReference>
<dbReference type="GeneID" id="4618458"/>
<dbReference type="KEGG" id="ago:AGOS_AAR029W"/>
<dbReference type="eggNOG" id="ENOG502S08R">
    <property type="taxonomic scope" value="Eukaryota"/>
</dbReference>
<dbReference type="HOGENOM" id="CLU_065404_0_0_1"/>
<dbReference type="InParanoid" id="Q75EQ0"/>
<dbReference type="OMA" id="GLMCNSW"/>
<dbReference type="OrthoDB" id="5586015at2759"/>
<dbReference type="Proteomes" id="UP000000591">
    <property type="component" value="Chromosome I"/>
</dbReference>
<dbReference type="GO" id="GO:0005737">
    <property type="term" value="C:cytoplasm"/>
    <property type="evidence" value="ECO:0007669"/>
    <property type="project" value="UniProtKB-KW"/>
</dbReference>
<dbReference type="GO" id="GO:0042729">
    <property type="term" value="C:DASH complex"/>
    <property type="evidence" value="ECO:0000250"/>
    <property type="project" value="UniProtKB"/>
</dbReference>
<dbReference type="GO" id="GO:1990537">
    <property type="term" value="C:mitotic spindle polar microtubule"/>
    <property type="evidence" value="ECO:0000318"/>
    <property type="project" value="GO_Central"/>
</dbReference>
<dbReference type="GO" id="GO:0044732">
    <property type="term" value="C:mitotic spindle pole body"/>
    <property type="evidence" value="ECO:0000318"/>
    <property type="project" value="GO_Central"/>
</dbReference>
<dbReference type="GO" id="GO:0042802">
    <property type="term" value="F:identical protein binding"/>
    <property type="evidence" value="ECO:0007669"/>
    <property type="project" value="EnsemblFungi"/>
</dbReference>
<dbReference type="GO" id="GO:0051010">
    <property type="term" value="F:microtubule plus-end binding"/>
    <property type="evidence" value="ECO:0007669"/>
    <property type="project" value="EnsemblFungi"/>
</dbReference>
<dbReference type="GO" id="GO:0008608">
    <property type="term" value="P:attachment of spindle microtubules to kinetochore"/>
    <property type="evidence" value="ECO:0000250"/>
    <property type="project" value="UniProtKB"/>
</dbReference>
<dbReference type="GO" id="GO:0051301">
    <property type="term" value="P:cell division"/>
    <property type="evidence" value="ECO:0007669"/>
    <property type="project" value="UniProtKB-KW"/>
</dbReference>
<dbReference type="GO" id="GO:0098653">
    <property type="term" value="P:centromere clustering"/>
    <property type="evidence" value="ECO:0007669"/>
    <property type="project" value="EnsemblFungi"/>
</dbReference>
<dbReference type="GO" id="GO:1990758">
    <property type="term" value="P:mitotic sister chromatid biorientation"/>
    <property type="evidence" value="ECO:0000250"/>
    <property type="project" value="UniProtKB"/>
</dbReference>
<dbReference type="GO" id="GO:0051987">
    <property type="term" value="P:positive regulation of attachment of spindle microtubules to kinetochore"/>
    <property type="evidence" value="ECO:0007669"/>
    <property type="project" value="EnsemblFungi"/>
</dbReference>
<dbReference type="GO" id="GO:0031116">
    <property type="term" value="P:positive regulation of microtubule polymerization"/>
    <property type="evidence" value="ECO:0007669"/>
    <property type="project" value="EnsemblFungi"/>
</dbReference>
<dbReference type="GO" id="GO:0071459">
    <property type="term" value="P:protein localization to chromosome, centromeric region"/>
    <property type="evidence" value="ECO:0007669"/>
    <property type="project" value="EnsemblFungi"/>
</dbReference>
<dbReference type="GO" id="GO:1990976">
    <property type="term" value="P:protein transport along microtubule to mitotic spindle pole body"/>
    <property type="evidence" value="ECO:0000250"/>
    <property type="project" value="UniProtKB"/>
</dbReference>
<dbReference type="InterPro" id="IPR013962">
    <property type="entry name" value="DASH_Dam1"/>
</dbReference>
<dbReference type="PANTHER" id="PTHR28113">
    <property type="entry name" value="DASH COMPLEX SUBUNIT DAM1"/>
    <property type="match status" value="1"/>
</dbReference>
<dbReference type="PANTHER" id="PTHR28113:SF1">
    <property type="entry name" value="DASH COMPLEX SUBUNIT DAM1"/>
    <property type="match status" value="1"/>
</dbReference>
<dbReference type="Pfam" id="PF08653">
    <property type="entry name" value="DASH_Dam1"/>
    <property type="match status" value="1"/>
</dbReference>
<accession>Q75EQ0</accession>
<evidence type="ECO:0000250" key="1">
    <source>
        <dbReference type="UniProtKB" id="P53267"/>
    </source>
</evidence>
<evidence type="ECO:0000250" key="2">
    <source>
        <dbReference type="UniProtKB" id="Q9HDZ6"/>
    </source>
</evidence>
<evidence type="ECO:0000255" key="3"/>
<evidence type="ECO:0000256" key="4">
    <source>
        <dbReference type="SAM" id="MobiDB-lite"/>
    </source>
</evidence>
<evidence type="ECO:0000305" key="5"/>
<feature type="chain" id="PRO_0000127656" description="DASH complex subunit DAM1">
    <location>
        <begin position="1"/>
        <end position="339"/>
    </location>
</feature>
<feature type="region of interest" description="Disordered" evidence="4">
    <location>
        <begin position="1"/>
        <end position="48"/>
    </location>
</feature>
<feature type="region of interest" description="Disordered" evidence="4">
    <location>
        <begin position="157"/>
        <end position="179"/>
    </location>
</feature>
<feature type="region of interest" description="Disordered" evidence="4">
    <location>
        <begin position="205"/>
        <end position="224"/>
    </location>
</feature>
<feature type="region of interest" description="Disordered" evidence="4">
    <location>
        <begin position="286"/>
        <end position="339"/>
    </location>
</feature>
<feature type="coiled-coil region" evidence="3">
    <location>
        <begin position="120"/>
        <end position="150"/>
    </location>
</feature>
<feature type="compositionally biased region" description="Basic and acidic residues" evidence="4">
    <location>
        <begin position="1"/>
        <end position="13"/>
    </location>
</feature>
<feature type="compositionally biased region" description="Low complexity" evidence="4">
    <location>
        <begin position="18"/>
        <end position="34"/>
    </location>
</feature>
<feature type="compositionally biased region" description="Polar residues" evidence="4">
    <location>
        <begin position="307"/>
        <end position="332"/>
    </location>
</feature>
<comment type="function">
    <text evidence="1">Component of the DASH complex that connects microtubules with kinetochores and couples microtubule depolymerisation to chromosome movement; it is involved in retrieving kinetochores to the spindle poles before their re-orientation on the spindle in early mitosis and allows microtubule depolymerization to pull chromosomes apart and resist detachment during anaphase. Kinetochores, consisting of a centromere-associated inner segment and a microtubule-contacting outer segment, play a crucial role in chromosome segregation by mediating the physical connection between centromeric DNA and microtubules. Kinetochores also serve as an input point for the spindle assembly checkpoint, which delays anaphase until all chromosomes have bioriented on the mitotic spindle.</text>
</comment>
<comment type="subunit">
    <text evidence="1 2">Component of the DASH complex consisting of ASK1, DAD1, DAD2, DAD3, DAD4, DAM1, DUO1, HSK3, SPC19 and SPC34, with a stoichiometry of one copy of each subunit per complex. Multiple DASH complexes oligomerize to form a ring that encircles spindle microtubules and organizes the rod-like NDC80 complexes of the outer kinetochore. DASH complex oligomerization strengthens microtubule attachments. Within the complex, DAM1 and DUO1 may form the microtubule connections (By similarity). On cytoplasmic microtubules, DASH complexes appear to form patches instead of rings (By similarity). Interacts with the outer kinetochore component NDC80; the interaction is direct (By similarity).</text>
</comment>
<comment type="subcellular location">
    <subcellularLocation>
        <location evidence="1">Nucleus</location>
    </subcellularLocation>
    <subcellularLocation>
        <location evidence="1">Cytoplasm</location>
        <location evidence="1">Cytoskeleton</location>
        <location evidence="1">Spindle</location>
    </subcellularLocation>
    <subcellularLocation>
        <location evidence="1">Chromosome</location>
        <location evidence="1">Centromere</location>
        <location evidence="1">Kinetochore</location>
    </subcellularLocation>
</comment>
<comment type="similarity">
    <text evidence="5">Belongs to the DASH complex DAM1 family.</text>
</comment>
<keyword id="KW-0131">Cell cycle</keyword>
<keyword id="KW-0132">Cell division</keyword>
<keyword id="KW-0137">Centromere</keyword>
<keyword id="KW-0158">Chromosome</keyword>
<keyword id="KW-0159">Chromosome partition</keyword>
<keyword id="KW-0175">Coiled coil</keyword>
<keyword id="KW-0963">Cytoplasm</keyword>
<keyword id="KW-0206">Cytoskeleton</keyword>
<keyword id="KW-0995">Kinetochore</keyword>
<keyword id="KW-0493">Microtubule</keyword>
<keyword id="KW-0498">Mitosis</keyword>
<keyword id="KW-0539">Nucleus</keyword>
<keyword id="KW-1185">Reference proteome</keyword>
<organism>
    <name type="scientific">Eremothecium gossypii (strain ATCC 10895 / CBS 109.51 / FGSC 9923 / NRRL Y-1056)</name>
    <name type="common">Yeast</name>
    <name type="synonym">Ashbya gossypii</name>
    <dbReference type="NCBI Taxonomy" id="284811"/>
    <lineage>
        <taxon>Eukaryota</taxon>
        <taxon>Fungi</taxon>
        <taxon>Dikarya</taxon>
        <taxon>Ascomycota</taxon>
        <taxon>Saccharomycotina</taxon>
        <taxon>Saccharomycetes</taxon>
        <taxon>Saccharomycetales</taxon>
        <taxon>Saccharomycetaceae</taxon>
        <taxon>Eremothecium</taxon>
    </lineage>
</organism>
<name>DAM1_EREGS</name>
<proteinExistence type="inferred from homology"/>
<reference key="1">
    <citation type="journal article" date="2004" name="Science">
        <title>The Ashbya gossypii genome as a tool for mapping the ancient Saccharomyces cerevisiae genome.</title>
        <authorList>
            <person name="Dietrich F.S."/>
            <person name="Voegeli S."/>
            <person name="Brachat S."/>
            <person name="Lerch A."/>
            <person name="Gates K."/>
            <person name="Steiner S."/>
            <person name="Mohr C."/>
            <person name="Poehlmann R."/>
            <person name="Luedi P."/>
            <person name="Choi S."/>
            <person name="Wing R.A."/>
            <person name="Flavier A."/>
            <person name="Gaffney T.D."/>
            <person name="Philippsen P."/>
        </authorList>
    </citation>
    <scope>NUCLEOTIDE SEQUENCE [LARGE SCALE GENOMIC DNA]</scope>
    <source>
        <strain>ATCC 10895 / CBS 109.51 / FGSC 9923 / NRRL Y-1056</strain>
    </source>
</reference>
<reference key="2">
    <citation type="journal article" date="2013" name="G3 (Bethesda)">
        <title>Genomes of Ashbya fungi isolated from insects reveal four mating-type loci, numerous translocations, lack of transposons, and distinct gene duplications.</title>
        <authorList>
            <person name="Dietrich F.S."/>
            <person name="Voegeli S."/>
            <person name="Kuo S."/>
            <person name="Philippsen P."/>
        </authorList>
    </citation>
    <scope>GENOME REANNOTATION</scope>
    <scope>SEQUENCE REVISION TO C-TERMINUS</scope>
    <source>
        <strain>ATCC 10895 / CBS 109.51 / FGSC 9923 / NRRL Y-1056</strain>
    </source>
</reference>
<protein>
    <recommendedName>
        <fullName>DASH complex subunit DAM1</fullName>
    </recommendedName>
    <alternativeName>
        <fullName>Outer kinetochore protein DAM1</fullName>
    </alternativeName>
</protein>
<gene>
    <name type="primary">DAM1</name>
    <name type="ordered locus">AAR029W</name>
</gene>
<sequence length="339" mass="36698">MSKESVRESKAATEYRLSISSNPGSRRSSFGGSSEHPAGSGIGNNKASNGELREATLVDTLLLPQVQELKDSMITLDANLTHMNFIHESLVDLNESVSALLYGLMCNSWCVDFPNMPHHTARELGISKELARLKEEKQQLLADLQGTAQAPSLVLKEKEPNTSKQKFQLPKPPMVSTRSVVAPVRTISEEEEDDNTAASFVSNPTVMGQPPHAPPPVARSNNAKGRRRYSILQQIRNHDLTGQKHMVANLGGTVKARAATHPIPESAGEKRKSLAVSAVRIGNNKRLQTSRPPSGGRDVTMARKRSGTQPAILNTNSITHSSTGAVPASSAQGRRPPFR</sequence>